<protein>
    <recommendedName>
        <fullName evidence="1">Proline--tRNA ligase</fullName>
        <ecNumber evidence="1">6.1.1.15</ecNumber>
    </recommendedName>
    <alternativeName>
        <fullName evidence="1">Prolyl-tRNA synthetase</fullName>
        <shortName evidence="1">ProRS</shortName>
    </alternativeName>
</protein>
<sequence length="572" mass="63515">MRTSQYLLSTLKETPADAEVISHQLMLRAGMIRKLASGLYTWLPTGLRVLKKVENIVREEMNNAGAIEVSMPVVQPADLWQESGRWEQYGPELLRFVDRGERPFVLGPTHEEVITDLVRNELSSYKQLPLNFFQIQTKFRDEVRPRFGVMRSREFLMKDAYSFHTSQESLQETYDAMYAAYSRIFSRMGLDFRAVQADTGSIGGNASHEFQVLAQSGEDDIVFSDVSDYAANIELAEAIAPQTPRAAATQEMTLVDTPNAKTIAELVEQFNLPIEKTVKTLLVKAAKDSKSTLVALLVRGDHELNEVKAEKLPHVASPLTFATEEEIRAVINAGPGSLGPVNMPIPVIIDRTVAAMSDFAAGANIDGKHYFGINWDRDVATPVVADIRNVVAGDPSPDGQGTLLIKRGIEVGHIFQLGTKYSEALKASVQGEDGRNQILTMGCYGIGVTRVVAAAIEQNFDERGIVWPDAIAPFQVAILPMNMHKSFRVQELAEKLYSELRAQGIEVLMDDRKERPGVMFADMELIGIPHTIVIGDRNLDNDDIEYKYRRSGKKSLIKTGDIVDYLVKAIKG</sequence>
<evidence type="ECO:0000255" key="1">
    <source>
        <dbReference type="HAMAP-Rule" id="MF_01569"/>
    </source>
</evidence>
<evidence type="ECO:0000305" key="2"/>
<proteinExistence type="inferred from homology"/>
<comment type="function">
    <text evidence="1">Catalyzes the attachment of proline to tRNA(Pro) in a two-step reaction: proline is first activated by ATP to form Pro-AMP and then transferred to the acceptor end of tRNA(Pro). As ProRS can inadvertently accommodate and process non-cognate amino acids such as alanine and cysteine, to avoid such errors it has two additional distinct editing activities against alanine. One activity is designated as 'pretransfer' editing and involves the tRNA(Pro)-independent hydrolysis of activated Ala-AMP. The other activity is designated 'posttransfer' editing and involves deacylation of mischarged Ala-tRNA(Pro). The misacylated Cys-tRNA(Pro) is not edited by ProRS.</text>
</comment>
<comment type="catalytic activity">
    <reaction evidence="1">
        <text>tRNA(Pro) + L-proline + ATP = L-prolyl-tRNA(Pro) + AMP + diphosphate</text>
        <dbReference type="Rhea" id="RHEA:14305"/>
        <dbReference type="Rhea" id="RHEA-COMP:9700"/>
        <dbReference type="Rhea" id="RHEA-COMP:9702"/>
        <dbReference type="ChEBI" id="CHEBI:30616"/>
        <dbReference type="ChEBI" id="CHEBI:33019"/>
        <dbReference type="ChEBI" id="CHEBI:60039"/>
        <dbReference type="ChEBI" id="CHEBI:78442"/>
        <dbReference type="ChEBI" id="CHEBI:78532"/>
        <dbReference type="ChEBI" id="CHEBI:456215"/>
        <dbReference type="EC" id="6.1.1.15"/>
    </reaction>
</comment>
<comment type="subunit">
    <text evidence="1">Homodimer.</text>
</comment>
<comment type="subcellular location">
    <subcellularLocation>
        <location evidence="1">Cytoplasm</location>
    </subcellularLocation>
</comment>
<comment type="domain">
    <text evidence="1">Consists of three domains: the N-terminal catalytic domain, the editing domain and the C-terminal anticodon-binding domain.</text>
</comment>
<comment type="similarity">
    <text evidence="1">Belongs to the class-II aminoacyl-tRNA synthetase family. ProS type 1 subfamily.</text>
</comment>
<comment type="sequence caution" evidence="2">
    <conflict type="erroneous initiation">
        <sequence resource="EMBL-CDS" id="AAX64147"/>
    </conflict>
</comment>
<dbReference type="EC" id="6.1.1.15" evidence="1"/>
<dbReference type="EMBL" id="AE017220">
    <property type="protein sequence ID" value="AAX64147.1"/>
    <property type="status" value="ALT_INIT"/>
    <property type="molecule type" value="Genomic_DNA"/>
</dbReference>
<dbReference type="RefSeq" id="WP_001539060.1">
    <property type="nucleotide sequence ID" value="NC_006905.1"/>
</dbReference>
<dbReference type="SMR" id="Q57T14"/>
<dbReference type="KEGG" id="sec:SCH_0241"/>
<dbReference type="HOGENOM" id="CLU_016739_0_0_6"/>
<dbReference type="Proteomes" id="UP000000538">
    <property type="component" value="Chromosome"/>
</dbReference>
<dbReference type="GO" id="GO:0005829">
    <property type="term" value="C:cytosol"/>
    <property type="evidence" value="ECO:0007669"/>
    <property type="project" value="TreeGrafter"/>
</dbReference>
<dbReference type="GO" id="GO:0002161">
    <property type="term" value="F:aminoacyl-tRNA deacylase activity"/>
    <property type="evidence" value="ECO:0007669"/>
    <property type="project" value="InterPro"/>
</dbReference>
<dbReference type="GO" id="GO:0005524">
    <property type="term" value="F:ATP binding"/>
    <property type="evidence" value="ECO:0007669"/>
    <property type="project" value="UniProtKB-UniRule"/>
</dbReference>
<dbReference type="GO" id="GO:0004827">
    <property type="term" value="F:proline-tRNA ligase activity"/>
    <property type="evidence" value="ECO:0007669"/>
    <property type="project" value="UniProtKB-UniRule"/>
</dbReference>
<dbReference type="GO" id="GO:0006433">
    <property type="term" value="P:prolyl-tRNA aminoacylation"/>
    <property type="evidence" value="ECO:0007669"/>
    <property type="project" value="UniProtKB-UniRule"/>
</dbReference>
<dbReference type="CDD" id="cd04334">
    <property type="entry name" value="ProRS-INS"/>
    <property type="match status" value="1"/>
</dbReference>
<dbReference type="CDD" id="cd00861">
    <property type="entry name" value="ProRS_anticodon_short"/>
    <property type="match status" value="1"/>
</dbReference>
<dbReference type="CDD" id="cd00779">
    <property type="entry name" value="ProRS_core_prok"/>
    <property type="match status" value="1"/>
</dbReference>
<dbReference type="FunFam" id="3.30.930.10:FF:000012">
    <property type="entry name" value="Proline--tRNA ligase"/>
    <property type="match status" value="1"/>
</dbReference>
<dbReference type="FunFam" id="3.30.930.10:FF:000097">
    <property type="entry name" value="Proline--tRNA ligase"/>
    <property type="match status" value="1"/>
</dbReference>
<dbReference type="FunFam" id="3.40.50.800:FF:000006">
    <property type="entry name" value="Proline--tRNA ligase"/>
    <property type="match status" value="1"/>
</dbReference>
<dbReference type="FunFam" id="3.90.960.10:FF:000001">
    <property type="entry name" value="Proline--tRNA ligase"/>
    <property type="match status" value="1"/>
</dbReference>
<dbReference type="Gene3D" id="3.40.50.800">
    <property type="entry name" value="Anticodon-binding domain"/>
    <property type="match status" value="1"/>
</dbReference>
<dbReference type="Gene3D" id="3.30.930.10">
    <property type="entry name" value="Bira Bifunctional Protein, Domain 2"/>
    <property type="match status" value="2"/>
</dbReference>
<dbReference type="Gene3D" id="3.90.960.10">
    <property type="entry name" value="YbaK/aminoacyl-tRNA synthetase-associated domain"/>
    <property type="match status" value="1"/>
</dbReference>
<dbReference type="HAMAP" id="MF_01569">
    <property type="entry name" value="Pro_tRNA_synth_type1"/>
    <property type="match status" value="1"/>
</dbReference>
<dbReference type="InterPro" id="IPR002314">
    <property type="entry name" value="aa-tRNA-synt_IIb"/>
</dbReference>
<dbReference type="InterPro" id="IPR006195">
    <property type="entry name" value="aa-tRNA-synth_II"/>
</dbReference>
<dbReference type="InterPro" id="IPR045864">
    <property type="entry name" value="aa-tRNA-synth_II/BPL/LPL"/>
</dbReference>
<dbReference type="InterPro" id="IPR004154">
    <property type="entry name" value="Anticodon-bd"/>
</dbReference>
<dbReference type="InterPro" id="IPR036621">
    <property type="entry name" value="Anticodon-bd_dom_sf"/>
</dbReference>
<dbReference type="InterPro" id="IPR002316">
    <property type="entry name" value="Pro-tRNA-ligase_IIa"/>
</dbReference>
<dbReference type="InterPro" id="IPR004500">
    <property type="entry name" value="Pro-tRNA-synth_IIa_bac-type"/>
</dbReference>
<dbReference type="InterPro" id="IPR023717">
    <property type="entry name" value="Pro-tRNA-Synthase_IIa_type1"/>
</dbReference>
<dbReference type="InterPro" id="IPR050062">
    <property type="entry name" value="Pro-tRNA_synthetase"/>
</dbReference>
<dbReference type="InterPro" id="IPR044140">
    <property type="entry name" value="ProRS_anticodon_short"/>
</dbReference>
<dbReference type="InterPro" id="IPR033730">
    <property type="entry name" value="ProRS_core_prok"/>
</dbReference>
<dbReference type="InterPro" id="IPR036754">
    <property type="entry name" value="YbaK/aa-tRNA-synt-asso_dom_sf"/>
</dbReference>
<dbReference type="InterPro" id="IPR007214">
    <property type="entry name" value="YbaK/aa-tRNA-synth-assoc-dom"/>
</dbReference>
<dbReference type="NCBIfam" id="NF006625">
    <property type="entry name" value="PRK09194.1"/>
    <property type="match status" value="1"/>
</dbReference>
<dbReference type="NCBIfam" id="TIGR00409">
    <property type="entry name" value="proS_fam_II"/>
    <property type="match status" value="1"/>
</dbReference>
<dbReference type="PANTHER" id="PTHR42753">
    <property type="entry name" value="MITOCHONDRIAL RIBOSOME PROTEIN L39/PROLYL-TRNA LIGASE FAMILY MEMBER"/>
    <property type="match status" value="1"/>
</dbReference>
<dbReference type="PANTHER" id="PTHR42753:SF2">
    <property type="entry name" value="PROLINE--TRNA LIGASE"/>
    <property type="match status" value="1"/>
</dbReference>
<dbReference type="Pfam" id="PF03129">
    <property type="entry name" value="HGTP_anticodon"/>
    <property type="match status" value="1"/>
</dbReference>
<dbReference type="Pfam" id="PF00587">
    <property type="entry name" value="tRNA-synt_2b"/>
    <property type="match status" value="1"/>
</dbReference>
<dbReference type="Pfam" id="PF04073">
    <property type="entry name" value="tRNA_edit"/>
    <property type="match status" value="1"/>
</dbReference>
<dbReference type="PIRSF" id="PIRSF001535">
    <property type="entry name" value="ProRS_1"/>
    <property type="match status" value="1"/>
</dbReference>
<dbReference type="PRINTS" id="PR01046">
    <property type="entry name" value="TRNASYNTHPRO"/>
</dbReference>
<dbReference type="SUPFAM" id="SSF52954">
    <property type="entry name" value="Class II aaRS ABD-related"/>
    <property type="match status" value="1"/>
</dbReference>
<dbReference type="SUPFAM" id="SSF55681">
    <property type="entry name" value="Class II aaRS and biotin synthetases"/>
    <property type="match status" value="1"/>
</dbReference>
<dbReference type="SUPFAM" id="SSF55826">
    <property type="entry name" value="YbaK/ProRS associated domain"/>
    <property type="match status" value="1"/>
</dbReference>
<dbReference type="PROSITE" id="PS50862">
    <property type="entry name" value="AA_TRNA_LIGASE_II"/>
    <property type="match status" value="1"/>
</dbReference>
<reference key="1">
    <citation type="journal article" date="2005" name="Nucleic Acids Res.">
        <title>The genome sequence of Salmonella enterica serovar Choleraesuis, a highly invasive and resistant zoonotic pathogen.</title>
        <authorList>
            <person name="Chiu C.-H."/>
            <person name="Tang P."/>
            <person name="Chu C."/>
            <person name="Hu S."/>
            <person name="Bao Q."/>
            <person name="Yu J."/>
            <person name="Chou Y.-Y."/>
            <person name="Wang H.-S."/>
            <person name="Lee Y.-S."/>
        </authorList>
    </citation>
    <scope>NUCLEOTIDE SEQUENCE [LARGE SCALE GENOMIC DNA]</scope>
    <source>
        <strain>SC-B67</strain>
    </source>
</reference>
<gene>
    <name evidence="1" type="primary">proS</name>
    <name type="ordered locus">SCH_0241</name>
</gene>
<feature type="chain" id="PRO_0000248758" description="Proline--tRNA ligase">
    <location>
        <begin position="1"/>
        <end position="572"/>
    </location>
</feature>
<accession>Q57T14</accession>
<keyword id="KW-0030">Aminoacyl-tRNA synthetase</keyword>
<keyword id="KW-0067">ATP-binding</keyword>
<keyword id="KW-0963">Cytoplasm</keyword>
<keyword id="KW-0436">Ligase</keyword>
<keyword id="KW-0547">Nucleotide-binding</keyword>
<keyword id="KW-0648">Protein biosynthesis</keyword>
<organism>
    <name type="scientific">Salmonella choleraesuis (strain SC-B67)</name>
    <dbReference type="NCBI Taxonomy" id="321314"/>
    <lineage>
        <taxon>Bacteria</taxon>
        <taxon>Pseudomonadati</taxon>
        <taxon>Pseudomonadota</taxon>
        <taxon>Gammaproteobacteria</taxon>
        <taxon>Enterobacterales</taxon>
        <taxon>Enterobacteriaceae</taxon>
        <taxon>Salmonella</taxon>
    </lineage>
</organism>
<name>SYP_SALCH</name>